<organism>
    <name type="scientific">Hahella chejuensis (strain KCTC 2396)</name>
    <dbReference type="NCBI Taxonomy" id="349521"/>
    <lineage>
        <taxon>Bacteria</taxon>
        <taxon>Pseudomonadati</taxon>
        <taxon>Pseudomonadota</taxon>
        <taxon>Gammaproteobacteria</taxon>
        <taxon>Oceanospirillales</taxon>
        <taxon>Hahellaceae</taxon>
        <taxon>Hahella</taxon>
    </lineage>
</organism>
<keyword id="KW-0120">Carbon dioxide fixation</keyword>
<keyword id="KW-0456">Lyase</keyword>
<keyword id="KW-0460">Magnesium</keyword>
<keyword id="KW-1185">Reference proteome</keyword>
<name>CAPP_HAHCH</name>
<gene>
    <name evidence="1" type="primary">ppc</name>
    <name type="ordered locus">HCH_01811</name>
</gene>
<comment type="function">
    <text evidence="1">Forms oxaloacetate, a four-carbon dicarboxylic acid source for the tricarboxylic acid cycle.</text>
</comment>
<comment type="catalytic activity">
    <reaction evidence="1">
        <text>oxaloacetate + phosphate = phosphoenolpyruvate + hydrogencarbonate</text>
        <dbReference type="Rhea" id="RHEA:28370"/>
        <dbReference type="ChEBI" id="CHEBI:16452"/>
        <dbReference type="ChEBI" id="CHEBI:17544"/>
        <dbReference type="ChEBI" id="CHEBI:43474"/>
        <dbReference type="ChEBI" id="CHEBI:58702"/>
        <dbReference type="EC" id="4.1.1.31"/>
    </reaction>
</comment>
<comment type="cofactor">
    <cofactor evidence="1">
        <name>Mg(2+)</name>
        <dbReference type="ChEBI" id="CHEBI:18420"/>
    </cofactor>
</comment>
<comment type="similarity">
    <text evidence="1">Belongs to the PEPCase type 1 family.</text>
</comment>
<reference key="1">
    <citation type="journal article" date="2005" name="Nucleic Acids Res.">
        <title>Genomic blueprint of Hahella chejuensis, a marine microbe producing an algicidal agent.</title>
        <authorList>
            <person name="Jeong H."/>
            <person name="Yim J.H."/>
            <person name="Lee C."/>
            <person name="Choi S.-H."/>
            <person name="Park Y.K."/>
            <person name="Yoon S.H."/>
            <person name="Hur C.-G."/>
            <person name="Kang H.-Y."/>
            <person name="Kim D."/>
            <person name="Lee H.H."/>
            <person name="Park K.H."/>
            <person name="Park S.-H."/>
            <person name="Park H.-S."/>
            <person name="Lee H.K."/>
            <person name="Oh T.K."/>
            <person name="Kim J.F."/>
        </authorList>
    </citation>
    <scope>NUCLEOTIDE SEQUENCE [LARGE SCALE GENOMIC DNA]</scope>
    <source>
        <strain>KCTC 2396</strain>
    </source>
</reference>
<feature type="chain" id="PRO_1000082428" description="Phosphoenolpyruvate carboxylase">
    <location>
        <begin position="1"/>
        <end position="881"/>
    </location>
</feature>
<feature type="active site" evidence="1">
    <location>
        <position position="142"/>
    </location>
</feature>
<feature type="active site" evidence="1">
    <location>
        <position position="547"/>
    </location>
</feature>
<sequence>MMKELHPELRENVRLLGELLGQSIRYHLGDEIFNKIEKIRIAAKADRNAEISQRKQLKEVLSGLNDEELAPVARAFNQFLNLTNIAEQYHIVRRRAPASELVDNRLDTIEVVFDRLIGQGVSKDKFFAQLADLNLEFVLTAHPTEITRRTLIQKYDQISECLESLDRSDLLDEEYAKIVERLRRLITEAWHTDEIRYERPTAVDEAKWGFAVIENSLWQAVPDFMRQMDAALLERFGEGLPINVNPVRFASWMGGDRDGNPNVTSEVTREVFLLSRWMAADLYLRDIEALRSELSMTACNGELARASGQSREPYRKILAKLRSRLEATRAWAAEALDSTKKPAAEVLLNNAELIEPLMVCYRSLRDCGMEVIANGPLLDVIRRAQCFGLQLVRLDIRQDSERHSDVMKEICAYLGIGDYSQWTEEEKQAFLIRELEGRRPLLPKEWPASAEAREVLDTCRVVAMQPPEGLASYVISMASDPSDVLTVILLLRESGMRHHIPIAPLFETLSDLQGAADSIGRLLDLPWYREYIGGKQEVMIGYSDSAKDAGQMAAAWAQYQAQEALVKVAAKHDVKLTLFHGRGGTVGRGGGPANRAILSQPPGSVAGNFRITEQGEMIRFKFGQPKVAKQSFNLYLGAVLEASLVPPPEPEPAWREMMDKLSHLAVNSYREVVRERPGFVEYFRSATPEQELGKLALGSRPARRKASGGVESLRAIPWIFAWTQMRLMLPAWLGSDTALQTAVDDGGADTLKAMLTGWPFFETHVDMLEMVLSKVDPEIARFYEERLVKPELHPLGDELRRRAGCAVRLINELKGQDELLLDNPVFMHSLQVRNPYTDPLHFLQVELLVRDRAEGETNKETVEKALKVTMAGVAAGMRNTG</sequence>
<dbReference type="EC" id="4.1.1.31" evidence="1"/>
<dbReference type="EMBL" id="CP000155">
    <property type="protein sequence ID" value="ABC28651.1"/>
    <property type="molecule type" value="Genomic_DNA"/>
</dbReference>
<dbReference type="RefSeq" id="WP_011395723.1">
    <property type="nucleotide sequence ID" value="NC_007645.1"/>
</dbReference>
<dbReference type="SMR" id="Q2SL23"/>
<dbReference type="STRING" id="349521.HCH_01811"/>
<dbReference type="KEGG" id="hch:HCH_01811"/>
<dbReference type="eggNOG" id="COG2352">
    <property type="taxonomic scope" value="Bacteria"/>
</dbReference>
<dbReference type="HOGENOM" id="CLU_006557_2_0_6"/>
<dbReference type="Proteomes" id="UP000000238">
    <property type="component" value="Chromosome"/>
</dbReference>
<dbReference type="GO" id="GO:0005829">
    <property type="term" value="C:cytosol"/>
    <property type="evidence" value="ECO:0007669"/>
    <property type="project" value="TreeGrafter"/>
</dbReference>
<dbReference type="GO" id="GO:0000287">
    <property type="term" value="F:magnesium ion binding"/>
    <property type="evidence" value="ECO:0007669"/>
    <property type="project" value="UniProtKB-UniRule"/>
</dbReference>
<dbReference type="GO" id="GO:0008964">
    <property type="term" value="F:phosphoenolpyruvate carboxylase activity"/>
    <property type="evidence" value="ECO:0007669"/>
    <property type="project" value="UniProtKB-UniRule"/>
</dbReference>
<dbReference type="GO" id="GO:0015977">
    <property type="term" value="P:carbon fixation"/>
    <property type="evidence" value="ECO:0007669"/>
    <property type="project" value="UniProtKB-UniRule"/>
</dbReference>
<dbReference type="GO" id="GO:0006107">
    <property type="term" value="P:oxaloacetate metabolic process"/>
    <property type="evidence" value="ECO:0007669"/>
    <property type="project" value="UniProtKB-UniRule"/>
</dbReference>
<dbReference type="GO" id="GO:0006099">
    <property type="term" value="P:tricarboxylic acid cycle"/>
    <property type="evidence" value="ECO:0007669"/>
    <property type="project" value="InterPro"/>
</dbReference>
<dbReference type="Gene3D" id="1.20.1440.90">
    <property type="entry name" value="Phosphoenolpyruvate/pyruvate domain"/>
    <property type="match status" value="1"/>
</dbReference>
<dbReference type="HAMAP" id="MF_00595">
    <property type="entry name" value="PEPcase_type1"/>
    <property type="match status" value="1"/>
</dbReference>
<dbReference type="InterPro" id="IPR021135">
    <property type="entry name" value="PEP_COase"/>
</dbReference>
<dbReference type="InterPro" id="IPR022805">
    <property type="entry name" value="PEP_COase_bac/pln-type"/>
</dbReference>
<dbReference type="InterPro" id="IPR018129">
    <property type="entry name" value="PEP_COase_Lys_AS"/>
</dbReference>
<dbReference type="InterPro" id="IPR033129">
    <property type="entry name" value="PEPCASE_His_AS"/>
</dbReference>
<dbReference type="InterPro" id="IPR015813">
    <property type="entry name" value="Pyrv/PenolPyrv_kinase-like_dom"/>
</dbReference>
<dbReference type="NCBIfam" id="NF000584">
    <property type="entry name" value="PRK00009.1"/>
    <property type="match status" value="1"/>
</dbReference>
<dbReference type="PANTHER" id="PTHR30523">
    <property type="entry name" value="PHOSPHOENOLPYRUVATE CARBOXYLASE"/>
    <property type="match status" value="1"/>
</dbReference>
<dbReference type="PANTHER" id="PTHR30523:SF6">
    <property type="entry name" value="PHOSPHOENOLPYRUVATE CARBOXYLASE"/>
    <property type="match status" value="1"/>
</dbReference>
<dbReference type="Pfam" id="PF00311">
    <property type="entry name" value="PEPcase"/>
    <property type="match status" value="1"/>
</dbReference>
<dbReference type="PRINTS" id="PR00150">
    <property type="entry name" value="PEPCARBXLASE"/>
</dbReference>
<dbReference type="SUPFAM" id="SSF51621">
    <property type="entry name" value="Phosphoenolpyruvate/pyruvate domain"/>
    <property type="match status" value="1"/>
</dbReference>
<dbReference type="PROSITE" id="PS00781">
    <property type="entry name" value="PEPCASE_1"/>
    <property type="match status" value="1"/>
</dbReference>
<dbReference type="PROSITE" id="PS00393">
    <property type="entry name" value="PEPCASE_2"/>
    <property type="match status" value="1"/>
</dbReference>
<accession>Q2SL23</accession>
<evidence type="ECO:0000255" key="1">
    <source>
        <dbReference type="HAMAP-Rule" id="MF_00595"/>
    </source>
</evidence>
<proteinExistence type="inferred from homology"/>
<protein>
    <recommendedName>
        <fullName evidence="1">Phosphoenolpyruvate carboxylase</fullName>
        <shortName evidence="1">PEPC</shortName>
        <shortName evidence="1">PEPCase</shortName>
        <ecNumber evidence="1">4.1.1.31</ecNumber>
    </recommendedName>
</protein>